<gene>
    <name evidence="1" type="primary">dapB</name>
    <name type="ordered locus">UTI89_C0034</name>
</gene>
<reference key="1">
    <citation type="journal article" date="2006" name="Proc. Natl. Acad. Sci. U.S.A.">
        <title>Identification of genes subject to positive selection in uropathogenic strains of Escherichia coli: a comparative genomics approach.</title>
        <authorList>
            <person name="Chen S.L."/>
            <person name="Hung C.-S."/>
            <person name="Xu J."/>
            <person name="Reigstad C.S."/>
            <person name="Magrini V."/>
            <person name="Sabo A."/>
            <person name="Blasiar D."/>
            <person name="Bieri T."/>
            <person name="Meyer R.R."/>
            <person name="Ozersky P."/>
            <person name="Armstrong J.R."/>
            <person name="Fulton R.S."/>
            <person name="Latreille J.P."/>
            <person name="Spieth J."/>
            <person name="Hooton T.M."/>
            <person name="Mardis E.R."/>
            <person name="Hultgren S.J."/>
            <person name="Gordon J.I."/>
        </authorList>
    </citation>
    <scope>NUCLEOTIDE SEQUENCE [LARGE SCALE GENOMIC DNA]</scope>
    <source>
        <strain>UTI89 / UPEC</strain>
    </source>
</reference>
<accession>Q1RGH0</accession>
<organism>
    <name type="scientific">Escherichia coli (strain UTI89 / UPEC)</name>
    <dbReference type="NCBI Taxonomy" id="364106"/>
    <lineage>
        <taxon>Bacteria</taxon>
        <taxon>Pseudomonadati</taxon>
        <taxon>Pseudomonadota</taxon>
        <taxon>Gammaproteobacteria</taxon>
        <taxon>Enterobacterales</taxon>
        <taxon>Enterobacteriaceae</taxon>
        <taxon>Escherichia</taxon>
    </lineage>
</organism>
<dbReference type="EC" id="1.17.1.8" evidence="1"/>
<dbReference type="EMBL" id="CP000243">
    <property type="protein sequence ID" value="ABE05544.1"/>
    <property type="molecule type" value="Genomic_DNA"/>
</dbReference>
<dbReference type="RefSeq" id="WP_000543585.1">
    <property type="nucleotide sequence ID" value="NZ_CP064825.1"/>
</dbReference>
<dbReference type="SMR" id="Q1RGH0"/>
<dbReference type="KEGG" id="eci:UTI89_C0034"/>
<dbReference type="HOGENOM" id="CLU_047479_2_1_6"/>
<dbReference type="UniPathway" id="UPA00034">
    <property type="reaction ID" value="UER00018"/>
</dbReference>
<dbReference type="Proteomes" id="UP000001952">
    <property type="component" value="Chromosome"/>
</dbReference>
<dbReference type="GO" id="GO:0005829">
    <property type="term" value="C:cytosol"/>
    <property type="evidence" value="ECO:0007669"/>
    <property type="project" value="TreeGrafter"/>
</dbReference>
<dbReference type="GO" id="GO:0008839">
    <property type="term" value="F:4-hydroxy-tetrahydrodipicolinate reductase"/>
    <property type="evidence" value="ECO:0007669"/>
    <property type="project" value="UniProtKB-EC"/>
</dbReference>
<dbReference type="GO" id="GO:0051287">
    <property type="term" value="F:NAD binding"/>
    <property type="evidence" value="ECO:0007669"/>
    <property type="project" value="UniProtKB-UniRule"/>
</dbReference>
<dbReference type="GO" id="GO:0050661">
    <property type="term" value="F:NADP binding"/>
    <property type="evidence" value="ECO:0007669"/>
    <property type="project" value="UniProtKB-UniRule"/>
</dbReference>
<dbReference type="GO" id="GO:0016726">
    <property type="term" value="F:oxidoreductase activity, acting on CH or CH2 groups, NAD or NADP as acceptor"/>
    <property type="evidence" value="ECO:0007669"/>
    <property type="project" value="UniProtKB-UniRule"/>
</dbReference>
<dbReference type="GO" id="GO:0019877">
    <property type="term" value="P:diaminopimelate biosynthetic process"/>
    <property type="evidence" value="ECO:0007669"/>
    <property type="project" value="UniProtKB-UniRule"/>
</dbReference>
<dbReference type="GO" id="GO:0009089">
    <property type="term" value="P:lysine biosynthetic process via diaminopimelate"/>
    <property type="evidence" value="ECO:0007669"/>
    <property type="project" value="UniProtKB-UniRule"/>
</dbReference>
<dbReference type="CDD" id="cd02274">
    <property type="entry name" value="DHDPR_N"/>
    <property type="match status" value="1"/>
</dbReference>
<dbReference type="FunFam" id="3.30.360.10:FF:000004">
    <property type="entry name" value="4-hydroxy-tetrahydrodipicolinate reductase"/>
    <property type="match status" value="1"/>
</dbReference>
<dbReference type="FunFam" id="3.40.50.720:FF:000048">
    <property type="entry name" value="4-hydroxy-tetrahydrodipicolinate reductase"/>
    <property type="match status" value="1"/>
</dbReference>
<dbReference type="Gene3D" id="3.30.360.10">
    <property type="entry name" value="Dihydrodipicolinate Reductase, domain 2"/>
    <property type="match status" value="1"/>
</dbReference>
<dbReference type="Gene3D" id="3.40.50.720">
    <property type="entry name" value="NAD(P)-binding Rossmann-like Domain"/>
    <property type="match status" value="1"/>
</dbReference>
<dbReference type="HAMAP" id="MF_00102">
    <property type="entry name" value="DapB"/>
    <property type="match status" value="1"/>
</dbReference>
<dbReference type="InterPro" id="IPR022663">
    <property type="entry name" value="DapB_C"/>
</dbReference>
<dbReference type="InterPro" id="IPR000846">
    <property type="entry name" value="DapB_N"/>
</dbReference>
<dbReference type="InterPro" id="IPR022664">
    <property type="entry name" value="DapB_N_CS"/>
</dbReference>
<dbReference type="InterPro" id="IPR023940">
    <property type="entry name" value="DHDPR_bac"/>
</dbReference>
<dbReference type="InterPro" id="IPR036291">
    <property type="entry name" value="NAD(P)-bd_dom_sf"/>
</dbReference>
<dbReference type="NCBIfam" id="TIGR00036">
    <property type="entry name" value="dapB"/>
    <property type="match status" value="1"/>
</dbReference>
<dbReference type="PANTHER" id="PTHR20836:SF0">
    <property type="entry name" value="4-HYDROXY-TETRAHYDRODIPICOLINATE REDUCTASE 1, CHLOROPLASTIC-RELATED"/>
    <property type="match status" value="1"/>
</dbReference>
<dbReference type="PANTHER" id="PTHR20836">
    <property type="entry name" value="DIHYDRODIPICOLINATE REDUCTASE"/>
    <property type="match status" value="1"/>
</dbReference>
<dbReference type="Pfam" id="PF05173">
    <property type="entry name" value="DapB_C"/>
    <property type="match status" value="1"/>
</dbReference>
<dbReference type="Pfam" id="PF01113">
    <property type="entry name" value="DapB_N"/>
    <property type="match status" value="1"/>
</dbReference>
<dbReference type="PIRSF" id="PIRSF000161">
    <property type="entry name" value="DHPR"/>
    <property type="match status" value="1"/>
</dbReference>
<dbReference type="SUPFAM" id="SSF55347">
    <property type="entry name" value="Glyceraldehyde-3-phosphate dehydrogenase-like, C-terminal domain"/>
    <property type="match status" value="1"/>
</dbReference>
<dbReference type="SUPFAM" id="SSF51735">
    <property type="entry name" value="NAD(P)-binding Rossmann-fold domains"/>
    <property type="match status" value="1"/>
</dbReference>
<dbReference type="PROSITE" id="PS01298">
    <property type="entry name" value="DAPB"/>
    <property type="match status" value="1"/>
</dbReference>
<evidence type="ECO:0000255" key="1">
    <source>
        <dbReference type="HAMAP-Rule" id="MF_00102"/>
    </source>
</evidence>
<evidence type="ECO:0000305" key="2"/>
<proteinExistence type="inferred from homology"/>
<feature type="chain" id="PRO_1000008563" description="4-hydroxy-tetrahydrodipicolinate reductase">
    <location>
        <begin position="1"/>
        <end position="273"/>
    </location>
</feature>
<feature type="active site" description="Proton donor/acceptor" evidence="1">
    <location>
        <position position="159"/>
    </location>
</feature>
<feature type="active site" description="Proton donor" evidence="1">
    <location>
        <position position="163"/>
    </location>
</feature>
<feature type="binding site" evidence="1">
    <location>
        <begin position="12"/>
        <end position="17"/>
    </location>
    <ligand>
        <name>NAD(+)</name>
        <dbReference type="ChEBI" id="CHEBI:57540"/>
    </ligand>
</feature>
<feature type="binding site" evidence="1">
    <location>
        <position position="38"/>
    </location>
    <ligand>
        <name>NAD(+)</name>
        <dbReference type="ChEBI" id="CHEBI:57540"/>
    </ligand>
</feature>
<feature type="binding site" evidence="1">
    <location>
        <position position="39"/>
    </location>
    <ligand>
        <name>NADP(+)</name>
        <dbReference type="ChEBI" id="CHEBI:58349"/>
    </ligand>
</feature>
<feature type="binding site" evidence="1">
    <location>
        <begin position="102"/>
        <end position="104"/>
    </location>
    <ligand>
        <name>NAD(+)</name>
        <dbReference type="ChEBI" id="CHEBI:57540"/>
    </ligand>
</feature>
<feature type="binding site" evidence="1">
    <location>
        <begin position="126"/>
        <end position="129"/>
    </location>
    <ligand>
        <name>NAD(+)</name>
        <dbReference type="ChEBI" id="CHEBI:57540"/>
    </ligand>
</feature>
<feature type="binding site" evidence="1">
    <location>
        <position position="160"/>
    </location>
    <ligand>
        <name>(S)-2,3,4,5-tetrahydrodipicolinate</name>
        <dbReference type="ChEBI" id="CHEBI:16845"/>
    </ligand>
</feature>
<feature type="binding site" evidence="1">
    <location>
        <begin position="169"/>
        <end position="170"/>
    </location>
    <ligand>
        <name>(S)-2,3,4,5-tetrahydrodipicolinate</name>
        <dbReference type="ChEBI" id="CHEBI:16845"/>
    </ligand>
</feature>
<comment type="function">
    <text evidence="1">Catalyzes the conversion of 4-hydroxy-tetrahydrodipicolinate (HTPA) to tetrahydrodipicolinate.</text>
</comment>
<comment type="catalytic activity">
    <reaction evidence="1">
        <text>(S)-2,3,4,5-tetrahydrodipicolinate + NAD(+) + H2O = (2S,4S)-4-hydroxy-2,3,4,5-tetrahydrodipicolinate + NADH + H(+)</text>
        <dbReference type="Rhea" id="RHEA:35323"/>
        <dbReference type="ChEBI" id="CHEBI:15377"/>
        <dbReference type="ChEBI" id="CHEBI:15378"/>
        <dbReference type="ChEBI" id="CHEBI:16845"/>
        <dbReference type="ChEBI" id="CHEBI:57540"/>
        <dbReference type="ChEBI" id="CHEBI:57945"/>
        <dbReference type="ChEBI" id="CHEBI:67139"/>
        <dbReference type="EC" id="1.17.1.8"/>
    </reaction>
</comment>
<comment type="catalytic activity">
    <reaction evidence="1">
        <text>(S)-2,3,4,5-tetrahydrodipicolinate + NADP(+) + H2O = (2S,4S)-4-hydroxy-2,3,4,5-tetrahydrodipicolinate + NADPH + H(+)</text>
        <dbReference type="Rhea" id="RHEA:35331"/>
        <dbReference type="ChEBI" id="CHEBI:15377"/>
        <dbReference type="ChEBI" id="CHEBI:15378"/>
        <dbReference type="ChEBI" id="CHEBI:16845"/>
        <dbReference type="ChEBI" id="CHEBI:57783"/>
        <dbReference type="ChEBI" id="CHEBI:58349"/>
        <dbReference type="ChEBI" id="CHEBI:67139"/>
        <dbReference type="EC" id="1.17.1.8"/>
    </reaction>
</comment>
<comment type="pathway">
    <text evidence="1">Amino-acid biosynthesis; L-lysine biosynthesis via DAP pathway; (S)-tetrahydrodipicolinate from L-aspartate: step 4/4.</text>
</comment>
<comment type="subunit">
    <text evidence="1">Homotetramer.</text>
</comment>
<comment type="subcellular location">
    <subcellularLocation>
        <location evidence="1">Cytoplasm</location>
    </subcellularLocation>
</comment>
<comment type="similarity">
    <text evidence="1">Belongs to the DapB family.</text>
</comment>
<comment type="caution">
    <text evidence="2">Was originally thought to be a dihydrodipicolinate reductase (DHDPR), catalyzing the conversion of dihydrodipicolinate to tetrahydrodipicolinate. However, it was shown in E.coli that the substrate of the enzymatic reaction is not dihydrodipicolinate (DHDP) but in fact (2S,4S)-4-hydroxy-2,3,4,5-tetrahydrodipicolinic acid (HTPA), the product released by the DapA-catalyzed reaction.</text>
</comment>
<keyword id="KW-0028">Amino-acid biosynthesis</keyword>
<keyword id="KW-0963">Cytoplasm</keyword>
<keyword id="KW-0220">Diaminopimelate biosynthesis</keyword>
<keyword id="KW-0457">Lysine biosynthesis</keyword>
<keyword id="KW-0520">NAD</keyword>
<keyword id="KW-0521">NADP</keyword>
<keyword id="KW-0560">Oxidoreductase</keyword>
<protein>
    <recommendedName>
        <fullName evidence="1">4-hydroxy-tetrahydrodipicolinate reductase</fullName>
        <shortName evidence="1">HTPA reductase</shortName>
        <ecNumber evidence="1">1.17.1.8</ecNumber>
    </recommendedName>
</protein>
<sequence>MHDANIRVAIAGAGGRMGRQLIQAALALEGVQLGAALEREGSSLLGSDAGELAGAGKTGVTVQSSLDAIKDDFDVFIDFTRPEGTLNHLAFCRQHGKGMVIGTTGFDEAGKQAIRDAAADIAIVFAANFSVGVNVMLKLLEKAAKVMGDYTDIEIIEAHHRHKVDAPSGTALAMGEAIAHALDKDLKDCAVYSREGHTGERVPGTIGFATVRAGDIVGEHTAMFADIGERLEITHKASSRMTFANGAVRSALWLSGKESGLFDMRDVLDLNNL</sequence>
<name>DAPB_ECOUT</name>